<organismHost>
    <name type="scientific">Brassica</name>
    <dbReference type="NCBI Taxonomy" id="3705"/>
</organismHost>
<keyword id="KW-0067">ATP-binding</keyword>
<keyword id="KW-0167">Capsid protein</keyword>
<keyword id="KW-0191">Covalent protein-RNA linkage</keyword>
<keyword id="KW-0903">Direct protein sequencing</keyword>
<keyword id="KW-1139">Helical capsid protein</keyword>
<keyword id="KW-0347">Helicase</keyword>
<keyword id="KW-1035">Host cytoplasm</keyword>
<keyword id="KW-1036">Host cytoplasmic vesicle</keyword>
<keyword id="KW-1043">Host membrane</keyword>
<keyword id="KW-1048">Host nucleus</keyword>
<keyword id="KW-0945">Host-virus interaction</keyword>
<keyword id="KW-0378">Hydrolase</keyword>
<keyword id="KW-1090">Inhibition of host innate immune response by virus</keyword>
<keyword id="KW-0472">Membrane</keyword>
<keyword id="KW-0547">Nucleotide-binding</keyword>
<keyword id="KW-0548">Nucleotidyltransferase</keyword>
<keyword id="KW-0597">Phosphoprotein</keyword>
<keyword id="KW-0645">Protease</keyword>
<keyword id="KW-0688">Ribosomal frameshifting</keyword>
<keyword id="KW-0696">RNA-directed RNA polymerase</keyword>
<keyword id="KW-0720">Serine protease</keyword>
<keyword id="KW-0941">Suppressor of RNA silencing</keyword>
<keyword id="KW-0788">Thiol protease</keyword>
<keyword id="KW-0808">Transferase</keyword>
<keyword id="KW-0812">Transmembrane</keyword>
<keyword id="KW-1133">Transmembrane helix</keyword>
<keyword id="KW-0899">Viral immunoevasion</keyword>
<keyword id="KW-0693">Viral RNA replication</keyword>
<keyword id="KW-0946">Virion</keyword>
<sequence length="3163" mass="357822">MAAVTFASAITNAITNKTTSTGMVQFGSFPPMPLRSTTVTTVATPVGQPKLYTVRFGSLDPVIVKGGAGSLAKATRQQPSVEIDVSLSEAAALEVAKPKSSAVLRMHEEANKERALFLDWEASLKRRSYGIAENEKVVMTTRGVSKIVPRSSRAMKQKRARERRRAQQPIILKWEPKLSGFSIGGGFSASAIEAEEVRTKWPLHKTPSMKKRMVHKTCKMSDQGVDMLIRSLVKIFKAKSANIEYIGKKPIKVDFIRKERTKFARIQVAHLLGKRAQRDLLAGMEENHFIDILSEYSGNGTTINPGVVCAGWSGIVVRNETLTQKRSRSPSKAFVIRGEHEDKLYDARIKITKTMSLKIVHFSARGANFWKGFDRCFLAYRSDNREHTCYSGLDVTECGEVAALMCLAMFPCGKITCPDCVIDSELSQGQASGPSMKHRLTQLRDVIKSSYPRFKHAVQILDRYEQSLSSANENYQDFAEIQSISDGVEKAAFPHVNKLNAILIKGATATGEEFSQATKHLLEIARYLKNRTENIEKGSLKSFRNKVSQKAHINPTLMCDNQLDKNGNFIWGERGYHAKRFFSNYFEIIDPKKGYTQYETRVVPNGSRKLAIGKLIVPTNFEVLREQMRGEPVEPYPVTVECVSKSQGDFVHACCCVTTESGDPVLSEIKMPTKHHLVIGNSGDPKYIDLPEIEENKMYIAKEGYCYINIFLAMLVNVKESQAKEFTKVVRDKLVSELGKWPTLLDVATACYFLKVFYPDVANAELPRMLVDHKTKIIHVVDSYGSLSTGYHVLKTNTVEQLIKFTRCNLESSLKHYRVGGTEWENAHGADNIDNPQWCIKRLVKGVYRPKQLKEDMLANPFLPLYALLSPGVILAFYNSGSLEHLMNHYISADSNVAVLLVVLKSLAKKVSTSQSVLAQLQIIERSLPELIEAKANINGPDDAATRACNRFMGMLLHMAEPNYELANGGYTFLRDHSISILEKSYLQILDEAWNELSWSERCVIRYYPSKQAIFTQKDLPMQSEADLGGRYSESVISSYEWSKQQAKGVKDSVVNKLRSSMSWTSSKVSNSVCRTINYLVPDVFKFMNVLVCISLLIKMTAEANHIITTQRRLKLDIEETERKKIEWELAFHHNILTHSASQHPTLDEFTAYIAEKAPHLSEHIEPEEKEVVHQAKRQSEQELERVIAFVALVLMMFDAERSDCVTKILNKLKGLVATVEPTVYHQTLNEIEDDLNERNLFVDFELSSDSEMLQQLPAEKTFASWWSHQLSRGFTIPHYRTEGKFMTFTRATATEVAGKIAHESDKDILLMGAVGSGKSTGLPYHLSRKGNVLLLEPTRPLAENVHKQLSQAPFHQNTTLRMRGLTAFGSAPISVMTSGFALNYFANNRSRIEEFDFVIFDECHVHDANAMAMRCLIHECDYSGKIIKVSATPPGREVEFSTQYPVSISTEDTLSFQDFVNAQGSGSNCDVISKGDNILVYVASYNEVDTLSKLLIERDFKVTKVDGRTMKVGNIEITTSGTPSRKHFIVATNIIENGVTLDIDVVADFGTKVLPYLDTDNRMLSTTKTSINYGERIQRLGRVGRHKPGHALRIGHTERGLSEVPSCIATEAALKCFTYGLPVITNNVSTSILGNVTVKQARTMSVFEITPFYTSQVVRYDGSMHPQVHALLKRFKLRDSEIVLTKLAIPNRGVNAGSQPVSMHDSVQMLKIGVTLRIPFMCRDIPEKLHLDMWDVVVKFKGDAGFGRLSSSASKVAYTLQTDVNSIQRTVTIIDTLIAEERRKQEYFKTVTSNCVSSSNFSLQSITNAIKSRMMKDHPCENISVLEGAKSQLLEFRNLNSDHSFVTKTDGISRSFMRDYGALEAVNHQSTNEMSKFLQLKGKWNKTLITRDVLVICGVLGGGVWMVVQHFRSKVSEPVTHEAKGKKQRQKLKFRNARDNKMGREVYGDDDTIEHFFGDAYTKKGKSKGRTRGIGHKNRKFINMYGFDPEDFSAVRFVDPLTGATLDDNPFTDITLVQKHFGDIRMDLLGEDELDSNEIRMNKTIQAYYMNNKTGKALKVDLTPHIPLKVCDLHATIAGFPERENELRQTGKAQPINIDEVPRANNELVPVDHESNSMFRGLRDYNPISNNICHLTNVSDGASNSLYGVGFGPLILTNRHLFERNNGELIIKSRHGEFVIKNTTQLHLLPIPDRDLLLIRLPKDVPPFPQKLGFRQPEKGERICMVGSNFQTKSITSIVSETSTIMPVENSQFWKHWISTKDGQCGSPMVSTKDGKILGLHSLANFQNSINYFAAFPDDFTEKYLHTIEAHEWVKHWKYNTSAISWGSLNIQASQPVSLFKVSKLISDLDSTAVYAQTQQNRWMFEQLTGNLKAIAHCPSQLVTKHTVKGKCQMFDLYLKLHDEAREYFQPMLGQYQKSKLNREAYAKDLLKYATPIEAGNIDCDLFEKTVEIVISDLRGYGFETCNYVTDENDIFEALNMKSAVGALYKGKKKDYFAEFTPEVKEEILKQSCERLFLGKMGVWNGSLKAELRPLEKVEANKTRTFTAAPLDTLLGGKVCVDDFNNQFYDHNLRAPWDVGMTKFYCGWDRLLESLPDGWVYCDADGSQFDSSLSPYLINAVLNIRLGFMEEWDVGEVMLRNLYTEIVYTPISTPDGTLVKKFKGNNSGQPSTVVDNTLMVILAVNYSLKKGGIPSELRDSIIRFFVNGDDLLLSVHPEYEYILDTMADNFRELGLKYTFDSRTREKGDLWFMSHQGHRREGIWIPKLEPERIVSILEWDRSKEPCHRLEAICAAMIESWGYDKLTHEIRKFYAWMIEQAPFSSLAQEGKAPYIAETALRKLYLDKEPAQEDLTQYLQAIFEDYEDGVEACVYHQAGETLDADLTEEQKQAEKEKKEREKAEKERERQKQLAFKKGKDVAQEEGKRDKEVNAGTSGTFSVPRLKSLTSKMRVPRYEKRVALNLDHLILYTPEQTDLSNTRSTRKQFDTWFEGVMADYELTEDKMQIILNGLRVWCIENGTSPNINGMWVMMDGDDQVEFPIKPLIDHAKPTFRQIMAHFSDVAEAYIEKRNQDRPYMPRYGLQRNLTDMSLARYAFDFYEMTSRTPIRAREAHIQMKAAALRGANNNLFGLDGNVGTTVENTERHTTEDVNRNMHNLLGVQGL</sequence>
<protein>
    <recommendedName>
        <fullName>Genome polyprotein</fullName>
    </recommendedName>
    <component>
        <recommendedName>
            <fullName evidence="14">P1 proteinase</fullName>
            <ecNumber evidence="2">3.4.-.-</ecNumber>
        </recommendedName>
        <alternativeName>
            <fullName>N-terminal protein</fullName>
        </alternativeName>
    </component>
    <component>
        <recommendedName>
            <fullName evidence="13">Helper component proteinase</fullName>
            <shortName evidence="13">HC-pro</shortName>
            <ecNumber evidence="2 13">3.4.22.45</ecNumber>
        </recommendedName>
    </component>
    <component>
        <recommendedName>
            <fullName>Protein P3</fullName>
        </recommendedName>
    </component>
    <component>
        <recommendedName>
            <fullName>6 kDa protein 1</fullName>
            <shortName>6K1</shortName>
        </recommendedName>
    </component>
    <component>
        <recommendedName>
            <fullName>Cytoplasmic inclusion protein</fullName>
            <shortName>CI</shortName>
            <ecNumber>3.6.4.-</ecNumber>
        </recommendedName>
    </component>
    <component>
        <recommendedName>
            <fullName>6 kDa protein 2</fullName>
            <shortName>6K2</shortName>
        </recommendedName>
    </component>
    <component>
        <recommendedName>
            <fullName>Viral genome-linked protein</fullName>
        </recommendedName>
        <alternativeName>
            <fullName>VPg</fullName>
        </alternativeName>
    </component>
    <component>
        <recommendedName>
            <fullName>Nuclear inclusion protein A</fullName>
            <shortName>NI-a</shortName>
            <shortName>NIa</shortName>
            <ecNumber>3.4.22.44</ecNumber>
        </recommendedName>
        <alternativeName>
            <fullName>49 kDa proteinase</fullName>
            <shortName>49 kDa-Pro</shortName>
        </alternativeName>
        <alternativeName>
            <fullName>NIa-pro</fullName>
        </alternativeName>
    </component>
    <component>
        <recommendedName>
            <fullName>Nuclear inclusion protein B</fullName>
            <shortName>NI-b</shortName>
            <shortName>NIb</shortName>
            <ecNumber evidence="9">2.7.7.48</ecNumber>
        </recommendedName>
        <alternativeName>
            <fullName evidence="9">RNA-directed RNA polymerase</fullName>
        </alternativeName>
    </component>
    <component>
        <recommendedName>
            <fullName>Capsid protein</fullName>
            <shortName>CP</shortName>
        </recommendedName>
        <alternativeName>
            <fullName>Coat protein</fullName>
        </alternativeName>
    </component>
</protein>
<organism>
    <name type="scientific">Turnip mosaic virus (strain Quebec)</name>
    <name type="common">TuMV</name>
    <dbReference type="NCBI Taxonomy" id="36396"/>
    <lineage>
        <taxon>Viruses</taxon>
        <taxon>Riboviria</taxon>
        <taxon>Orthornavirae</taxon>
        <taxon>Pisuviricota</taxon>
        <taxon>Stelpaviricetes</taxon>
        <taxon>Patatavirales</taxon>
        <taxon>Potyviridae</taxon>
        <taxon>Potyvirus</taxon>
        <taxon>Potyvirus rapae</taxon>
        <taxon>Turnip mosaic virus (strain Japanese)</taxon>
    </lineage>
</organism>
<dbReference type="EC" id="3.4.-.-" evidence="2"/>
<dbReference type="EC" id="3.4.22.45" evidence="2 13"/>
<dbReference type="EC" id="3.6.4.-"/>
<dbReference type="EC" id="3.4.22.44"/>
<dbReference type="EC" id="2.7.7.48" evidence="9"/>
<dbReference type="EMBL" id="D10927">
    <property type="protein sequence ID" value="BAA01725.1"/>
    <property type="molecule type" value="Genomic_RNA"/>
</dbReference>
<dbReference type="EMBL" id="D10601">
    <property type="protein sequence ID" value="BAA01452.1"/>
    <property type="molecule type" value="Genomic_RNA"/>
</dbReference>
<dbReference type="PIR" id="JQ1895">
    <property type="entry name" value="JQ1895"/>
</dbReference>
<dbReference type="MEROPS" id="C04.001"/>
<dbReference type="MEROPS" id="C06.001"/>
<dbReference type="Proteomes" id="UP000008263">
    <property type="component" value="Genome"/>
</dbReference>
<dbReference type="GO" id="GO:0019029">
    <property type="term" value="C:helical viral capsid"/>
    <property type="evidence" value="ECO:0007669"/>
    <property type="project" value="UniProtKB-KW"/>
</dbReference>
<dbReference type="GO" id="GO:0044161">
    <property type="term" value="C:host cell cytoplasmic vesicle"/>
    <property type="evidence" value="ECO:0007669"/>
    <property type="project" value="UniProtKB-SubCell"/>
</dbReference>
<dbReference type="GO" id="GO:0033644">
    <property type="term" value="C:host cell membrane"/>
    <property type="evidence" value="ECO:0007669"/>
    <property type="project" value="UniProtKB-SubCell"/>
</dbReference>
<dbReference type="GO" id="GO:0042025">
    <property type="term" value="C:host cell nucleus"/>
    <property type="evidence" value="ECO:0007669"/>
    <property type="project" value="UniProtKB-SubCell"/>
</dbReference>
<dbReference type="GO" id="GO:0016020">
    <property type="term" value="C:membrane"/>
    <property type="evidence" value="ECO:0007669"/>
    <property type="project" value="UniProtKB-KW"/>
</dbReference>
<dbReference type="GO" id="GO:0005524">
    <property type="term" value="F:ATP binding"/>
    <property type="evidence" value="ECO:0007669"/>
    <property type="project" value="UniProtKB-KW"/>
</dbReference>
<dbReference type="GO" id="GO:0004197">
    <property type="term" value="F:cysteine-type endopeptidase activity"/>
    <property type="evidence" value="ECO:0007669"/>
    <property type="project" value="InterPro"/>
</dbReference>
<dbReference type="GO" id="GO:0004386">
    <property type="term" value="F:helicase activity"/>
    <property type="evidence" value="ECO:0007669"/>
    <property type="project" value="UniProtKB-KW"/>
</dbReference>
<dbReference type="GO" id="GO:0016818">
    <property type="term" value="F:hydrolase activity, acting on acid anhydrides, in phosphorus-containing anhydrides"/>
    <property type="evidence" value="ECO:0007669"/>
    <property type="project" value="InterPro"/>
</dbReference>
<dbReference type="GO" id="GO:0003723">
    <property type="term" value="F:RNA binding"/>
    <property type="evidence" value="ECO:0007669"/>
    <property type="project" value="InterPro"/>
</dbReference>
<dbReference type="GO" id="GO:0003968">
    <property type="term" value="F:RNA-directed RNA polymerase activity"/>
    <property type="evidence" value="ECO:0007669"/>
    <property type="project" value="UniProtKB-KW"/>
</dbReference>
<dbReference type="GO" id="GO:0008236">
    <property type="term" value="F:serine-type peptidase activity"/>
    <property type="evidence" value="ECO:0007669"/>
    <property type="project" value="UniProtKB-KW"/>
</dbReference>
<dbReference type="GO" id="GO:0005198">
    <property type="term" value="F:structural molecule activity"/>
    <property type="evidence" value="ECO:0007669"/>
    <property type="project" value="InterPro"/>
</dbReference>
<dbReference type="GO" id="GO:0006351">
    <property type="term" value="P:DNA-templated transcription"/>
    <property type="evidence" value="ECO:0007669"/>
    <property type="project" value="InterPro"/>
</dbReference>
<dbReference type="GO" id="GO:0006508">
    <property type="term" value="P:proteolysis"/>
    <property type="evidence" value="ECO:0007669"/>
    <property type="project" value="UniProtKB-KW"/>
</dbReference>
<dbReference type="GO" id="GO:0052170">
    <property type="term" value="P:symbiont-mediated suppression of host innate immune response"/>
    <property type="evidence" value="ECO:0007669"/>
    <property type="project" value="UniProtKB-KW"/>
</dbReference>
<dbReference type="GO" id="GO:0039694">
    <property type="term" value="P:viral RNA genome replication"/>
    <property type="evidence" value="ECO:0007669"/>
    <property type="project" value="InterPro"/>
</dbReference>
<dbReference type="GO" id="GO:0075523">
    <property type="term" value="P:viral translational frameshifting"/>
    <property type="evidence" value="ECO:0007669"/>
    <property type="project" value="UniProtKB-KW"/>
</dbReference>
<dbReference type="CDD" id="cd23175">
    <property type="entry name" value="ps-ssRNAv_Potyviridae_RdRp"/>
    <property type="match status" value="1"/>
</dbReference>
<dbReference type="Gene3D" id="3.30.70.270">
    <property type="match status" value="1"/>
</dbReference>
<dbReference type="Gene3D" id="3.90.70.150">
    <property type="entry name" value="Helper component proteinase"/>
    <property type="match status" value="1"/>
</dbReference>
<dbReference type="Gene3D" id="3.40.50.300">
    <property type="entry name" value="P-loop containing nucleotide triphosphate hydrolases"/>
    <property type="match status" value="2"/>
</dbReference>
<dbReference type="Gene3D" id="2.40.10.10">
    <property type="entry name" value="Trypsin-like serine proteases"/>
    <property type="match status" value="2"/>
</dbReference>
<dbReference type="InterPro" id="IPR011545">
    <property type="entry name" value="DEAD/DEAH_box_helicase_dom"/>
</dbReference>
<dbReference type="InterPro" id="IPR043502">
    <property type="entry name" value="DNA/RNA_pol_sf"/>
</dbReference>
<dbReference type="InterPro" id="IPR001456">
    <property type="entry name" value="HC-pro"/>
</dbReference>
<dbReference type="InterPro" id="IPR031159">
    <property type="entry name" value="HC_PRO_CPD_dom"/>
</dbReference>
<dbReference type="InterPro" id="IPR042308">
    <property type="entry name" value="HC_PRO_CPD_sf"/>
</dbReference>
<dbReference type="InterPro" id="IPR014001">
    <property type="entry name" value="Helicase_ATP-bd"/>
</dbReference>
<dbReference type="InterPro" id="IPR001650">
    <property type="entry name" value="Helicase_C-like"/>
</dbReference>
<dbReference type="InterPro" id="IPR027417">
    <property type="entry name" value="P-loop_NTPase"/>
</dbReference>
<dbReference type="InterPro" id="IPR002540">
    <property type="entry name" value="Pept_S30_P1_potyvir"/>
</dbReference>
<dbReference type="InterPro" id="IPR009003">
    <property type="entry name" value="Peptidase_S1_PA"/>
</dbReference>
<dbReference type="InterPro" id="IPR043504">
    <property type="entry name" value="Peptidase_S1_PA_chymotrypsin"/>
</dbReference>
<dbReference type="InterPro" id="IPR001592">
    <property type="entry name" value="Poty_coat"/>
</dbReference>
<dbReference type="InterPro" id="IPR001730">
    <property type="entry name" value="Potyv_NIa-pro_dom"/>
</dbReference>
<dbReference type="InterPro" id="IPR039560">
    <property type="entry name" value="Potyvirid-P3"/>
</dbReference>
<dbReference type="InterPro" id="IPR013648">
    <property type="entry name" value="PP_Potyviridae"/>
</dbReference>
<dbReference type="InterPro" id="IPR043128">
    <property type="entry name" value="Rev_trsase/Diguanyl_cyclase"/>
</dbReference>
<dbReference type="InterPro" id="IPR001205">
    <property type="entry name" value="RNA-dir_pol_C"/>
</dbReference>
<dbReference type="InterPro" id="IPR007094">
    <property type="entry name" value="RNA-dir_pol_PSvirus"/>
</dbReference>
<dbReference type="PANTHER" id="PTHR43519">
    <property type="entry name" value="ATP-DEPENDENT RNA HELICASE HRPB"/>
    <property type="match status" value="1"/>
</dbReference>
<dbReference type="PANTHER" id="PTHR43519:SF1">
    <property type="entry name" value="ATP-DEPENDENT RNA HELICASE HRPB"/>
    <property type="match status" value="1"/>
</dbReference>
<dbReference type="Pfam" id="PF00270">
    <property type="entry name" value="DEAD"/>
    <property type="match status" value="1"/>
</dbReference>
<dbReference type="Pfam" id="PF00271">
    <property type="entry name" value="Helicase_C"/>
    <property type="match status" value="1"/>
</dbReference>
<dbReference type="Pfam" id="PF00863">
    <property type="entry name" value="Peptidase_C4"/>
    <property type="match status" value="1"/>
</dbReference>
<dbReference type="Pfam" id="PF00851">
    <property type="entry name" value="Peptidase_C6"/>
    <property type="match status" value="1"/>
</dbReference>
<dbReference type="Pfam" id="PF01577">
    <property type="entry name" value="Peptidase_S30"/>
    <property type="match status" value="1"/>
</dbReference>
<dbReference type="Pfam" id="PF00767">
    <property type="entry name" value="Poty_coat"/>
    <property type="match status" value="1"/>
</dbReference>
<dbReference type="Pfam" id="PF08440">
    <property type="entry name" value="Poty_PP"/>
    <property type="match status" value="1"/>
</dbReference>
<dbReference type="Pfam" id="PF13608">
    <property type="entry name" value="Potyvirid-P3"/>
    <property type="match status" value="1"/>
</dbReference>
<dbReference type="Pfam" id="PF00680">
    <property type="entry name" value="RdRP_1"/>
    <property type="match status" value="1"/>
</dbReference>
<dbReference type="PRINTS" id="PR00966">
    <property type="entry name" value="NIAPOTYPTASE"/>
</dbReference>
<dbReference type="SMART" id="SM00487">
    <property type="entry name" value="DEXDc"/>
    <property type="match status" value="1"/>
</dbReference>
<dbReference type="SMART" id="SM00490">
    <property type="entry name" value="HELICc"/>
    <property type="match status" value="1"/>
</dbReference>
<dbReference type="SUPFAM" id="SSF56672">
    <property type="entry name" value="DNA/RNA polymerases"/>
    <property type="match status" value="1"/>
</dbReference>
<dbReference type="SUPFAM" id="SSF52540">
    <property type="entry name" value="P-loop containing nucleoside triphosphate hydrolases"/>
    <property type="match status" value="2"/>
</dbReference>
<dbReference type="SUPFAM" id="SSF50494">
    <property type="entry name" value="Trypsin-like serine proteases"/>
    <property type="match status" value="1"/>
</dbReference>
<dbReference type="PROSITE" id="PS51744">
    <property type="entry name" value="HC_PRO_CPD"/>
    <property type="match status" value="1"/>
</dbReference>
<dbReference type="PROSITE" id="PS51192">
    <property type="entry name" value="HELICASE_ATP_BIND_1"/>
    <property type="match status" value="1"/>
</dbReference>
<dbReference type="PROSITE" id="PS51194">
    <property type="entry name" value="HELICASE_CTER"/>
    <property type="match status" value="1"/>
</dbReference>
<dbReference type="PROSITE" id="PS51436">
    <property type="entry name" value="POTYVIRUS_NIA_PRO"/>
    <property type="match status" value="1"/>
</dbReference>
<dbReference type="PROSITE" id="PS51871">
    <property type="entry name" value="PV_P1_PRO"/>
    <property type="match status" value="1"/>
</dbReference>
<dbReference type="PROSITE" id="PS50507">
    <property type="entry name" value="RDRP_SSRNA_POS"/>
    <property type="match status" value="1"/>
</dbReference>
<evidence type="ECO:0000250" key="1"/>
<evidence type="ECO:0000250" key="2">
    <source>
        <dbReference type="UniProtKB" id="P04517"/>
    </source>
</evidence>
<evidence type="ECO:0000250" key="3">
    <source>
        <dbReference type="UniProtKB" id="P09814"/>
    </source>
</evidence>
<evidence type="ECO:0000250" key="4">
    <source>
        <dbReference type="UniProtKB" id="P13529"/>
    </source>
</evidence>
<evidence type="ECO:0000250" key="5">
    <source>
        <dbReference type="UniProtKB" id="P18247"/>
    </source>
</evidence>
<evidence type="ECO:0000250" key="6">
    <source>
        <dbReference type="UniProtKB" id="P21231"/>
    </source>
</evidence>
<evidence type="ECO:0000250" key="7">
    <source>
        <dbReference type="UniProtKB" id="Q9ICI2"/>
    </source>
</evidence>
<evidence type="ECO:0000255" key="8"/>
<evidence type="ECO:0000255" key="9">
    <source>
        <dbReference type="PROSITE-ProRule" id="PRU00539"/>
    </source>
</evidence>
<evidence type="ECO:0000255" key="10">
    <source>
        <dbReference type="PROSITE-ProRule" id="PRU00541"/>
    </source>
</evidence>
<evidence type="ECO:0000255" key="11">
    <source>
        <dbReference type="PROSITE-ProRule" id="PRU00542"/>
    </source>
</evidence>
<evidence type="ECO:0000255" key="12">
    <source>
        <dbReference type="PROSITE-ProRule" id="PRU00766"/>
    </source>
</evidence>
<evidence type="ECO:0000255" key="13">
    <source>
        <dbReference type="PROSITE-ProRule" id="PRU01080"/>
    </source>
</evidence>
<evidence type="ECO:0000255" key="14">
    <source>
        <dbReference type="PROSITE-ProRule" id="PRU01219"/>
    </source>
</evidence>
<evidence type="ECO:0000256" key="15">
    <source>
        <dbReference type="SAM" id="MobiDB-lite"/>
    </source>
</evidence>
<evidence type="ECO:0000269" key="16">
    <source>
    </source>
</evidence>
<evidence type="ECO:0000269" key="17">
    <source>
    </source>
</evidence>
<evidence type="ECO:0000305" key="18"/>
<evidence type="ECO:0000305" key="19">
    <source>
    </source>
</evidence>
<comment type="function">
    <molecule>Helper component proteinase</molecule>
    <text evidence="2 13">Cysteine protease that cleaves a Gly-Gly dipeptide at its own C-terminus (By similarity). Required for aphid transmission and also has proteolytic activity (By similarity). Interacts with virions and aphid stylets (By similarity). Acts as a suppressor of RNA-mediated gene silencing, also known as post-transcriptional gene silencing (PTGS), a mechanism of plant viral defense that limits the accumulation of viral RNAs (By similarity). May have RNA-binding activity (By similarity).</text>
</comment>
<comment type="function">
    <molecule>Cytoplasmic inclusion protein</molecule>
    <text>Has helicase activity. It may be involved in replication.</text>
</comment>
<comment type="function">
    <molecule>6 kDa protein 1</molecule>
    <text evidence="4">Indispensable for virus replication.</text>
</comment>
<comment type="function">
    <molecule>6 kDa protein 2</molecule>
    <text evidence="7">Responsible for the formation of peripheral motile host endoplasmic reticulum (ER)-derived viral vesicles called 'viral factories', seat of the viral RNA (vRNA) replication and carrying vRNA to plasmodesmata for delivery into adjacent non-infected cells; this process relies on host Sec24a-binding.</text>
</comment>
<comment type="function">
    <molecule>Viral genome-linked protein</molecule>
    <text evidence="5">Mediates the cap-independent, EIF4E-dependent translation of viral genomic RNAs (By similarity). Binds to the cap-binding site of host EIF4E and thus interferes with the host EIF4E-dependent mRNA export and translation (By similarity). VPg-RNA directly binds EIF4E and is a template for transcription (By similarity). Also forms trimeric complexes with EIF4E-EIF4G, which are templates for translation (By similarity).</text>
</comment>
<comment type="function">
    <molecule>Nuclear inclusion protein A</molecule>
    <text evidence="2">Has RNA-binding and proteolytic activities.</text>
</comment>
<comment type="function">
    <molecule>Nuclear inclusion protein B</molecule>
    <text evidence="7">RNA-dependent RNA polymerase that ensures transcription and replication of viral RNA (vRNA).</text>
</comment>
<comment type="function">
    <molecule>Capsid protein</molecule>
    <text evidence="2">Involved in aphid transmission, cell-to-cell and systemis movement, encapsidation of the viral RNA and in the regulation of viral RNA amplification.</text>
</comment>
<comment type="catalytic activity">
    <reaction evidence="9">
        <text>RNA(n) + a ribonucleoside 5'-triphosphate = RNA(n+1) + diphosphate</text>
        <dbReference type="Rhea" id="RHEA:21248"/>
        <dbReference type="Rhea" id="RHEA-COMP:14527"/>
        <dbReference type="Rhea" id="RHEA-COMP:17342"/>
        <dbReference type="ChEBI" id="CHEBI:33019"/>
        <dbReference type="ChEBI" id="CHEBI:61557"/>
        <dbReference type="ChEBI" id="CHEBI:140395"/>
        <dbReference type="EC" id="2.7.7.48"/>
    </reaction>
</comment>
<comment type="catalytic activity">
    <reaction evidence="2">
        <text>Hydrolyzes glutaminyl bonds, and activity is further restricted by preferences for the amino acids in P6 - P1' that vary with the species of potyvirus, e.g. Glu-Xaa-Xaa-Tyr-Xaa-Gln-|-(Ser or Gly) for the enzyme from tobacco etch virus. The natural substrate is the viral polyprotein, but other proteins and oligopeptides containing the appropriate consensus sequence are also cleaved.</text>
        <dbReference type="EC" id="3.4.22.44"/>
    </reaction>
</comment>
<comment type="catalytic activity">
    <reaction evidence="2 13">
        <text>Hydrolyzes a Gly-|-Gly bond at its own C-terminus, commonly in the sequence -Tyr-Xaa-Val-Gly-|-Gly, in the processing of the potyviral polyprotein.</text>
        <dbReference type="EC" id="3.4.22.45"/>
    </reaction>
</comment>
<comment type="subunit">
    <molecule>Viral genome-linked protein</molecule>
    <text evidence="5 19">Interacts with host eIF4E protein (via cap-binding region); this interaction mediates the translation of the VPg-viral RNA conjugates (Probable). Part of a complex that comprises VPg, RNA, host EIF4E and EIF4G; this interaction mediates the translation of the VPg-viral RNA conjugates (By similarity).</text>
</comment>
<comment type="subunit">
    <molecule>6 kDa protein 2</molecule>
    <text evidence="7">Interacts, via N-terminal region, with host Sec24a protein in COPII-coated vesicles (By similarity). This binding triggers the formation of host endoplasmic reticulum (ER)-derived viral vesicles involved in cell-to-cell viral movement (By similarity).</text>
</comment>
<comment type="subcellular location">
    <molecule>6 kDa protein 1</molecule>
    <subcellularLocation>
        <location evidence="7">Host cytoplasm</location>
    </subcellularLocation>
    <subcellularLocation>
        <location evidence="7">Host nucleus</location>
    </subcellularLocation>
    <subcellularLocation>
        <location evidence="4">Host cytoplasmic vesicle</location>
    </subcellularLocation>
    <text evidence="4">Probably colocalizes with 6K2-induced vesicles associated with host chloroplasts.</text>
</comment>
<comment type="subcellular location">
    <molecule>6 kDa protein 2</molecule>
    <subcellularLocation>
        <location evidence="7">Host cytoplasmic vesicle</location>
    </subcellularLocation>
    <subcellularLocation>
        <location evidence="7">Host membrane</location>
    </subcellularLocation>
    <text evidence="3">6K-induced vesicles associate with host chloroplasts.</text>
</comment>
<comment type="subcellular location">
    <molecule>Viral genome-linked protein</molecule>
    <subcellularLocation>
        <location evidence="6">Host nucleus</location>
    </subcellularLocation>
    <text evidence="6">Binds to host plant eIF4E proteins in the host nucleus.</text>
</comment>
<comment type="subcellular location">
    <molecule>Capsid protein</molecule>
    <subcellularLocation>
        <location evidence="18">Virion</location>
    </subcellularLocation>
</comment>
<comment type="alternative products">
    <event type="ribosomal frameshifting"/>
    <isoform>
        <id>Q02597-1</id>
        <name>Genome polyprotein</name>
        <sequence type="displayed"/>
    </isoform>
    <isoform>
        <id>P0CK12-1</id>
        <name>P3N-PIPO polyprotein</name>
        <sequence type="external"/>
    </isoform>
</comment>
<comment type="domain">
    <molecule>Helper component proteinase</molecule>
    <text>The N-terminus is involved in interaction with stylets. The central part is involved in interaction with virions and the C-terminus is involved in cell-to cell movement of the virus.</text>
</comment>
<comment type="PTM">
    <molecule>Viral genome-linked protein</molecule>
    <text evidence="3">VPg is uridylylated by the polymerase and is covalently attached to the 5'-end of the genomic RNA. This uridylylated form acts as a nucleotide-peptide primer for the polymerase (By similarity).</text>
</comment>
<comment type="PTM">
    <molecule>Genome polyprotein</molecule>
    <text evidence="1">Potyviral RNA is expressed as two polyproteins which undergo post-translational proteolytic processing. Genome polyprotein is processed by NIa-pro, P1 and HC-pro proteinases resulting in the production of at least ten individual proteins. P3N-PIPO polyprotein is cleaved by P1 and HC-pro proteinases resulting in the production of three individual proteins. The P1 proteinase and the HC-pro cleave only their respective C-termini autocatalytically. 6K1 is essential for proper proteolytic separation of P3 from CI (By similarity).</text>
</comment>
<comment type="miscellaneous">
    <molecule>Isoform Genome polyprotein</molecule>
    <text>Produced by conventional translation.</text>
</comment>
<comment type="similarity">
    <text evidence="18">Belongs to the potyviridae genome polyprotein family.</text>
</comment>
<feature type="chain" id="PRO_0000420030" description="Genome polyprotein">
    <location>
        <begin position="1"/>
        <end position="3163"/>
    </location>
</feature>
<feature type="chain" id="PRO_0000040473" description="P1 proteinase" evidence="8">
    <location>
        <begin position="1"/>
        <end position="362"/>
    </location>
</feature>
<feature type="chain" id="PRO_0000040474" description="Helper component proteinase" evidence="8">
    <location>
        <begin position="363"/>
        <end position="820"/>
    </location>
</feature>
<feature type="chain" id="PRO_0000040475" description="Protein P3" evidence="1">
    <location>
        <begin position="821"/>
        <end position="1175"/>
    </location>
</feature>
<feature type="chain" id="PRO_0000040476" description="6 kDa protein 1" evidence="1">
    <location>
        <begin position="1176"/>
        <end position="1227"/>
    </location>
</feature>
<feature type="chain" id="PRO_0000040477" description="Cytoplasmic inclusion protein" evidence="1">
    <location>
        <begin position="1228"/>
        <end position="1870"/>
    </location>
</feature>
<feature type="chain" id="PRO_0000040478" description="6 kDa protein 2" evidence="1">
    <location>
        <begin position="1871"/>
        <end position="1923"/>
    </location>
</feature>
<feature type="chain" id="PRO_0000040479" description="Viral genome-linked protein" evidence="1">
    <location>
        <begin position="1924"/>
        <end position="2115"/>
    </location>
</feature>
<feature type="chain" id="PRO_0000040480" description="Nuclear inclusion protein A" evidence="1">
    <location>
        <begin position="2116"/>
        <end position="2358"/>
    </location>
</feature>
<feature type="chain" id="PRO_0000040481" description="Nuclear inclusion protein B" evidence="1">
    <location>
        <begin position="2359"/>
        <end position="2875"/>
    </location>
</feature>
<feature type="chain" id="PRO_0000040482" description="Capsid protein" evidence="1">
    <location>
        <begin position="2876"/>
        <end position="3163"/>
    </location>
</feature>
<feature type="topological domain" description="Cytoplasmic" evidence="18">
    <location>
        <begin position="1871"/>
        <end position="1888"/>
    </location>
</feature>
<feature type="transmembrane region" description="Helical" evidence="8">
    <location>
        <begin position="1889"/>
        <end position="1909"/>
    </location>
</feature>
<feature type="topological domain" description="Lumenal" evidence="18">
    <location>
        <begin position="1910"/>
        <end position="1923"/>
    </location>
</feature>
<feature type="domain" description="Peptidase S30" evidence="14">
    <location>
        <begin position="219"/>
        <end position="362"/>
    </location>
</feature>
<feature type="domain" description="Peptidase C6" evidence="13">
    <location>
        <begin position="698"/>
        <end position="820"/>
    </location>
</feature>
<feature type="domain" description="Helicase ATP-binding" evidence="10">
    <location>
        <begin position="1300"/>
        <end position="1452"/>
    </location>
</feature>
<feature type="domain" description="Helicase C-terminal" evidence="11">
    <location>
        <begin position="1471"/>
        <end position="1630"/>
    </location>
</feature>
<feature type="domain" description="Peptidase C4" evidence="12">
    <location>
        <begin position="2116"/>
        <end position="2334"/>
    </location>
</feature>
<feature type="domain" description="RdRp catalytic" evidence="9">
    <location>
        <begin position="2600"/>
        <end position="2724"/>
    </location>
</feature>
<feature type="region of interest" description="Binding to host eIF(iso)4E" evidence="16">
    <location>
        <begin position="1983"/>
        <end position="2017"/>
    </location>
</feature>
<feature type="region of interest" description="Disordered" evidence="15">
    <location>
        <begin position="2883"/>
        <end position="2934"/>
    </location>
</feature>
<feature type="short sequence motif" description="Involved in interaction with stylet and aphid transmission" evidence="1">
    <location>
        <begin position="414"/>
        <end position="417"/>
    </location>
</feature>
<feature type="short sequence motif" description="Involved in virions binding and aphid transmission" evidence="1">
    <location>
        <begin position="672"/>
        <end position="674"/>
    </location>
</feature>
<feature type="short sequence motif" description="DEAH box" evidence="10">
    <location>
        <begin position="1402"/>
        <end position="1405"/>
    </location>
</feature>
<feature type="short sequence motif" description="Nuclear localization signal" evidence="8">
    <location>
        <begin position="1964"/>
        <end position="1971"/>
    </location>
</feature>
<feature type="compositionally biased region" description="Basic and acidic residues" evidence="15">
    <location>
        <begin position="2886"/>
        <end position="2930"/>
    </location>
</feature>
<feature type="active site" description="For P1 proteinase activity" evidence="14">
    <location>
        <position position="270"/>
    </location>
</feature>
<feature type="active site" description="For P1 proteinase activity" evidence="14">
    <location>
        <position position="279"/>
    </location>
</feature>
<feature type="active site" description="For P1 proteinase activity" evidence="14">
    <location>
        <position position="313"/>
    </location>
</feature>
<feature type="active site" description="For helper component proteinase activity" evidence="13">
    <location>
        <position position="706"/>
    </location>
</feature>
<feature type="active site" description="For helper component proteinase activity" evidence="13">
    <location>
        <position position="779"/>
    </location>
</feature>
<feature type="active site" description="For nuclear inclusion protein A activity" evidence="12">
    <location>
        <position position="2161"/>
    </location>
</feature>
<feature type="active site" description="For nuclear inclusion protein A activity" evidence="12">
    <location>
        <position position="2196"/>
    </location>
</feature>
<feature type="active site" description="For nuclear inclusion protein A activity" evidence="12">
    <location>
        <position position="2266"/>
    </location>
</feature>
<feature type="binding site" evidence="10">
    <location>
        <begin position="1313"/>
        <end position="1320"/>
    </location>
    <ligand>
        <name>ATP</name>
        <dbReference type="ChEBI" id="CHEBI:30616"/>
    </ligand>
</feature>
<feature type="site" description="Cleavage; by P1 proteinase" evidence="14">
    <location>
        <begin position="362"/>
        <end position="363"/>
    </location>
</feature>
<feature type="site" description="Cleavage; by autolysis" evidence="13">
    <location>
        <begin position="820"/>
        <end position="821"/>
    </location>
</feature>
<feature type="site" description="Cleavage; by NIa-pro" evidence="1">
    <location>
        <begin position="1175"/>
        <end position="1176"/>
    </location>
</feature>
<feature type="site" description="Cleavage; by NIa-pro" evidence="1">
    <location>
        <begin position="1227"/>
        <end position="1228"/>
    </location>
</feature>
<feature type="site" description="Cleavage; by NIa-pro" evidence="1">
    <location>
        <begin position="1870"/>
        <end position="1871"/>
    </location>
</feature>
<feature type="site" description="Cleavage; by NIa-pro" evidence="1">
    <location>
        <begin position="2115"/>
        <end position="2116"/>
    </location>
</feature>
<feature type="site" description="Cleavage; by NIa-pro" evidence="1">
    <location>
        <begin position="2358"/>
        <end position="2359"/>
    </location>
</feature>
<feature type="site" description="Cleavage; by NIa-pro" evidence="1">
    <location>
        <begin position="2875"/>
        <end position="2876"/>
    </location>
</feature>
<feature type="modified residue" description="O-(5'-phospho-RNA)-tyrosine" evidence="3">
    <location>
        <position position="1986"/>
    </location>
</feature>
<feature type="mutagenesis site" description="Replicates in eIF(iso)4G1-knockout host." evidence="17">
    <original>E</original>
    <variation>Q</variation>
    <location>
        <position position="2039"/>
    </location>
</feature>
<feature type="mutagenesis site" description="Replicates in eIF(iso)4G1-knockout host." evidence="17">
    <original>N</original>
    <variation>Y</variation>
    <location>
        <position position="2086"/>
    </location>
</feature>
<feature type="sequence conflict" description="In Ref. 2; BAA01452." evidence="18" ref="2">
    <original>E</original>
    <variation>G</variation>
    <location>
        <position position="2862"/>
    </location>
</feature>
<name>POLG_TUMVQ</name>
<proteinExistence type="evidence at protein level"/>
<reference key="1">
    <citation type="journal article" date="1992" name="J. Gen. Virol.">
        <title>The complete nucleotide sequence of turnip mosaic potyvirus RNA.</title>
        <authorList>
            <person name="Nicolas O."/>
            <person name="Laliberte J.F."/>
        </authorList>
    </citation>
    <scope>NUCLEOTIDE SEQUENCE [GENOMIC RNA]</scope>
</reference>
<reference key="2">
    <citation type="journal article" date="1990" name="J. Gen. Virol.">
        <title>Sequence of the 3'-terminal region of turnip mosaic virus RNA and the capsid protein gene.</title>
        <authorList>
            <person name="Tremblay M.F."/>
            <person name="Nicolas O."/>
            <person name="Sinha R."/>
            <person name="Lazure C."/>
            <person name="Laliberte J.F."/>
        </authorList>
    </citation>
    <scope>NUCLEOTIDE SEQUENCE [GENOMIC RNA] OF 1534-3163</scope>
    <scope>PARTIAL PROTEIN SEQUENCE</scope>
</reference>
<reference key="3">
    <citation type="journal article" date="2000" name="J. Virol.">
        <title>Complex formation between potyvirus VPg and translation eukaryotic initiation factor 4E correlates with virus infectivity.</title>
        <authorList>
            <person name="Leonard S."/>
            <person name="Plante D."/>
            <person name="Wittmann S."/>
            <person name="Daigneault N."/>
            <person name="Fortin M.G."/>
            <person name="Laliberte J.F."/>
        </authorList>
    </citation>
    <scope>INTERACTION WITH HOST EIF(ISO)4E (VIRAL GENOME-LINKED PROTEIN)</scope>
    <scope>INTERACTION WITH HOST EIF4E (VIRAL GENOME-LINKED PROTEIN)</scope>
</reference>
<reference key="4">
    <citation type="journal article" date="2001" name="Virus Res.">
        <title>Potyvirus proteins: a wealth of functions.</title>
        <authorList>
            <person name="Urcuqui-Inchima S."/>
            <person name="Haenni A.L."/>
            <person name="Bernardi F."/>
        </authorList>
    </citation>
    <scope>REVIEW</scope>
</reference>
<reference key="5">
    <citation type="journal article" date="2008" name="Biochimie">
        <title>Turnip mosaic virus VPg interacts with Arabidopsis thaliana eIF(iso)4E and inhibits in vitro translation.</title>
        <authorList>
            <person name="Miyoshi H."/>
            <person name="Okade H."/>
            <person name="Muto S."/>
            <person name="Suehiro N."/>
            <person name="Nakashima H."/>
            <person name="Tomoo K."/>
            <person name="Natsuaki T."/>
        </authorList>
    </citation>
    <scope>INTERACTION WITH HOST EIF(ISO)4E (VIRAL GENOME-LINKED PROTEIN)</scope>
    <scope>FUNCTION (VIRAL GENOME-LINKED PROTEIN)</scope>
</reference>
<reference key="6">
    <citation type="journal article" date="2017" name="Genet. Mol. Biol.">
        <title>Translational control in plant antiviral immunity.</title>
        <authorList>
            <person name="Machado J.P.B."/>
            <person name="Calil I.P."/>
            <person name="Santos A.A."/>
            <person name="Fontes E.P.B."/>
        </authorList>
    </citation>
    <scope>REVIEW</scope>
</reference>
<reference key="7">
    <citation type="journal article" date="2018" name="Plant Biotechnol. J.">
        <title>Trans-species synthetic gene design allows resistance pyramiding and broad-spectrum engineering of virus resistance in plants.</title>
        <authorList>
            <person name="Bastet A."/>
            <person name="Lederer B."/>
            <person name="Giovinazzo N."/>
            <person name="Arnoux X."/>
            <person name="German-Retana S."/>
            <person name="Reinbold C."/>
            <person name="Brault V."/>
            <person name="Garcia D."/>
            <person name="Djennane S."/>
            <person name="Gersch S."/>
            <person name="Lemaire O."/>
            <person name="Robaglia C."/>
            <person name="Gallois J.-L."/>
        </authorList>
    </citation>
    <scope>MUTAGENESIS OF GLU-2039 AND ASN-2086</scope>
</reference>
<accession>Q02597</accession>